<reference key="1">
    <citation type="journal article" date="1999" name="Mol. Microbiol.">
        <title>Molecular and functional analysis indicates a mosaic structure of Salmonella pathogenicity island 2.</title>
        <authorList>
            <person name="Hensel M."/>
            <person name="Egelseer C."/>
            <person name="Nikolaus T."/>
        </authorList>
    </citation>
    <scope>NUCLEOTIDE SEQUENCE [GENOMIC DNA]</scope>
    <source>
        <strain>LT2</strain>
    </source>
</reference>
<reference key="2">
    <citation type="journal article" date="2001" name="J. Bacteriol.">
        <title>The alternative electron acceptor tetrathionate supports B12-dependent anaerobic growth of Salmonella enterica serovar typhimurium on ethanolamine or 1,2-propanediol.</title>
        <authorList>
            <person name="Price-Carter M."/>
            <person name="Tingey J."/>
            <person name="Bobik T.A."/>
            <person name="Roth J.R."/>
        </authorList>
    </citation>
    <scope>NUCLEOTIDE SEQUENCE [GENOMIC DNA]</scope>
    <scope>INDUCTION</scope>
    <source>
        <strain>LT2</strain>
    </source>
</reference>
<reference key="3">
    <citation type="journal article" date="2004" name="Appl. Environ. Microbiol.">
        <title>Diagnostic real-time PCR for detection of Salmonella in food.</title>
        <authorList>
            <person name="Malorny B."/>
            <person name="Paccassoni E."/>
            <person name="Fach P."/>
            <person name="Bunge C."/>
            <person name="Martin A."/>
            <person name="Helmuth R."/>
        </authorList>
    </citation>
    <scope>NUCLEOTIDE SEQUENCE [GENOMIC DNA]</scope>
    <source>
        <strain>51K61</strain>
    </source>
</reference>
<reference key="4">
    <citation type="journal article" date="2001" name="Nature">
        <title>Complete genome sequence of Salmonella enterica serovar Typhimurium LT2.</title>
        <authorList>
            <person name="McClelland M."/>
            <person name="Sanderson K.E."/>
            <person name="Spieth J."/>
            <person name="Clifton S.W."/>
            <person name="Latreille P."/>
            <person name="Courtney L."/>
            <person name="Porwollik S."/>
            <person name="Ali J."/>
            <person name="Dante M."/>
            <person name="Du F."/>
            <person name="Hou S."/>
            <person name="Layman D."/>
            <person name="Leonard S."/>
            <person name="Nguyen C."/>
            <person name="Scott K."/>
            <person name="Holmes A."/>
            <person name="Grewal N."/>
            <person name="Mulvaney E."/>
            <person name="Ryan E."/>
            <person name="Sun H."/>
            <person name="Florea L."/>
            <person name="Miller W."/>
            <person name="Stoneking T."/>
            <person name="Nhan M."/>
            <person name="Waterston R."/>
            <person name="Wilson R.K."/>
        </authorList>
    </citation>
    <scope>NUCLEOTIDE SEQUENCE [LARGE SCALE GENOMIC DNA]</scope>
    <source>
        <strain>LT2 / SGSC1412 / ATCC 700720</strain>
    </source>
</reference>
<reference key="5">
    <citation type="journal article" date="1999" name="Mol. Microbiol.">
        <title>The genetic basis of tetrathionate respiration in Salmonella typhimurium.</title>
        <authorList>
            <person name="Hensel M."/>
            <person name="Hinsley A.P."/>
            <person name="Nikolaus T."/>
            <person name="Sawers G."/>
            <person name="Berks B.C."/>
        </authorList>
    </citation>
    <scope>FUNCTION</scope>
    <scope>SUBUNIT</scope>
    <scope>SUBCELLULAR LOCATION</scope>
    <scope>INDUCTION</scope>
    <source>
        <strain>LT2</strain>
    </source>
</reference>
<reference key="6">
    <citation type="journal article" date="2010" name="Nature">
        <title>Gut inflammation provides a respiratory electron acceptor for Salmonella.</title>
        <authorList>
            <person name="Winter S.E."/>
            <person name="Thiennimitr P."/>
            <person name="Winter M.G."/>
            <person name="Butler B.P."/>
            <person name="Huseby D.L."/>
            <person name="Crawford R.W."/>
            <person name="Russell J.M."/>
            <person name="Bevins C.L."/>
            <person name="Adams L.G."/>
            <person name="Tsolis R.M."/>
            <person name="Roth J.R."/>
            <person name="Baumler A.J."/>
        </authorList>
    </citation>
    <scope>FUNCTION IN VIRULENCE</scope>
</reference>
<name>TTRC_SALTY</name>
<sequence>MTHSLIIEEVLAHPQDISWLPWAVQYFFFIGIAACAALFACYLHWRKKDAATEENRALLIAITCAITAPLALTADLHQTARVWHFYAWPTPWSWMPWGALFLPLFTGFLALWFLAQQIKRLFNKSYNVTKWLALASALCAVGLLIYTGREVSVVLARPIWFSYAFPVAMFLSALQAFFALMIVAARRDSVRLPKILWGQIWTLAALGLVVAMWVSGDTLSGTAIRQWITVALSAKYYAVGWVALWVCTLLFCSLALRHPLSQLRRVLLVLSALALCWLMRWTLLIQVQTVPKFNAQFNPYSLPGGTDGWLAILGTFGLWIALLIIIRETLNGLTRRLQHG</sequence>
<proteinExistence type="evidence at protein level"/>
<organism>
    <name type="scientific">Salmonella typhimurium (strain LT2 / SGSC1412 / ATCC 700720)</name>
    <dbReference type="NCBI Taxonomy" id="99287"/>
    <lineage>
        <taxon>Bacteria</taxon>
        <taxon>Pseudomonadati</taxon>
        <taxon>Pseudomonadota</taxon>
        <taxon>Gammaproteobacteria</taxon>
        <taxon>Enterobacterales</taxon>
        <taxon>Enterobacteriaceae</taxon>
        <taxon>Salmonella</taxon>
    </lineage>
</organism>
<feature type="chain" id="PRO_0000417420" description="Tetrathionate reductase subunit C">
    <location>
        <begin position="1"/>
        <end position="340"/>
    </location>
</feature>
<feature type="transmembrane region" description="Helical" evidence="1">
    <location>
        <begin position="19"/>
        <end position="39"/>
    </location>
</feature>
<feature type="transmembrane region" description="Helical" evidence="1">
    <location>
        <begin position="57"/>
        <end position="77"/>
    </location>
</feature>
<feature type="transmembrane region" description="Helical" evidence="1">
    <location>
        <begin position="94"/>
        <end position="114"/>
    </location>
</feature>
<feature type="transmembrane region" description="Helical" evidence="1">
    <location>
        <begin position="128"/>
        <end position="148"/>
    </location>
</feature>
<feature type="transmembrane region" description="Helical" evidence="1">
    <location>
        <begin position="164"/>
        <end position="184"/>
    </location>
</feature>
<feature type="transmembrane region" description="Helical" evidence="1">
    <location>
        <begin position="195"/>
        <end position="215"/>
    </location>
</feature>
<feature type="transmembrane region" description="Helical" evidence="1">
    <location>
        <begin position="236"/>
        <end position="256"/>
    </location>
</feature>
<feature type="transmembrane region" description="Helical" evidence="1">
    <location>
        <begin position="266"/>
        <end position="286"/>
    </location>
</feature>
<feature type="transmembrane region" description="Helical" evidence="1">
    <location>
        <begin position="306"/>
        <end position="326"/>
    </location>
</feature>
<gene>
    <name type="primary">ttrC</name>
    <name type="ordered locus">STM1384</name>
</gene>
<evidence type="ECO:0000255" key="1"/>
<evidence type="ECO:0000269" key="2">
    <source>
    </source>
</evidence>
<evidence type="ECO:0000269" key="3">
    <source>
    </source>
</evidence>
<evidence type="ECO:0000269" key="4">
    <source>
    </source>
</evidence>
<evidence type="ECO:0000305" key="5"/>
<evidence type="ECO:0000305" key="6">
    <source>
    </source>
</evidence>
<comment type="function">
    <text evidence="2 4">Part of a membrane-bound tetrathionate reductase that catalyzes the reduction of tetrathionate to thiosulfate. TtrC probably anchors TtrA and TtrB to the periplasmic face of the cytoplasmic membrane. May transfer electrons from membrane quinol to TtrB. During mice infection, the ability to use tetrathionate as an electron acceptor is a growth advantage for S.typhimurium over the competing microbiota in the lumen of the inflamed gut.</text>
</comment>
<comment type="subunit">
    <text evidence="2">Probably composed of three subunits: TtrA, TtrB and TtrC.</text>
</comment>
<comment type="subcellular location">
    <subcellularLocation>
        <location evidence="6">Cell inner membrane</location>
        <topology evidence="6">Multi-pass membrane protein</topology>
    </subcellularLocation>
</comment>
<comment type="induction">
    <text evidence="2 3">Transcriptionally regulated by Fnr and by the TtrR/TtrS two-component regulatory system.</text>
</comment>
<comment type="similarity">
    <text evidence="5">Belongs to the NrfD family.</text>
</comment>
<accession>Q9Z4S7</accession>
<accession>Q7BK18</accession>
<accession>Q7CQN0</accession>
<dbReference type="EMBL" id="AJ224978">
    <property type="protein sequence ID" value="CAB37415.1"/>
    <property type="molecule type" value="Genomic_DNA"/>
</dbReference>
<dbReference type="EMBL" id="AF282268">
    <property type="protein sequence ID" value="AAG31758.1"/>
    <property type="molecule type" value="Genomic_DNA"/>
</dbReference>
<dbReference type="EMBL" id="AY578064">
    <property type="protein sequence ID" value="AAS90304.1"/>
    <property type="molecule type" value="Genomic_DNA"/>
</dbReference>
<dbReference type="EMBL" id="AE006468">
    <property type="protein sequence ID" value="AAL20308.1"/>
    <property type="molecule type" value="Genomic_DNA"/>
</dbReference>
<dbReference type="RefSeq" id="NP_460349.1">
    <property type="nucleotide sequence ID" value="NC_003197.2"/>
</dbReference>
<dbReference type="RefSeq" id="WP_000149760.1">
    <property type="nucleotide sequence ID" value="NC_003197.2"/>
</dbReference>
<dbReference type="SMR" id="Q9Z4S7"/>
<dbReference type="STRING" id="99287.STM1384"/>
<dbReference type="PaxDb" id="99287-STM1384"/>
<dbReference type="GeneID" id="1252902"/>
<dbReference type="KEGG" id="stm:STM1384"/>
<dbReference type="PATRIC" id="fig|99287.12.peg.1467"/>
<dbReference type="HOGENOM" id="CLU_061956_0_0_6"/>
<dbReference type="BioCyc" id="MetaCyc:MONOMER-12551"/>
<dbReference type="BioCyc" id="SENT99287:STM1384-MONOMER"/>
<dbReference type="Proteomes" id="UP000001014">
    <property type="component" value="Chromosome"/>
</dbReference>
<dbReference type="GO" id="GO:0005886">
    <property type="term" value="C:plasma membrane"/>
    <property type="evidence" value="ECO:0000318"/>
    <property type="project" value="GO_Central"/>
</dbReference>
<dbReference type="FunFam" id="1.20.1630.10:FF:000002">
    <property type="entry name" value="Tetrathionate reductase subunit C"/>
    <property type="match status" value="1"/>
</dbReference>
<dbReference type="Gene3D" id="1.20.1630.10">
    <property type="entry name" value="Formate dehydrogenase/DMSO reductase domain"/>
    <property type="match status" value="1"/>
</dbReference>
<dbReference type="InterPro" id="IPR052049">
    <property type="entry name" value="Electron_transfer_protein"/>
</dbReference>
<dbReference type="InterPro" id="IPR005614">
    <property type="entry name" value="NrfD-like"/>
</dbReference>
<dbReference type="NCBIfam" id="NF011568">
    <property type="entry name" value="PRK14992.1"/>
    <property type="match status" value="1"/>
</dbReference>
<dbReference type="PANTHER" id="PTHR34856">
    <property type="entry name" value="PROTEIN NRFD"/>
    <property type="match status" value="1"/>
</dbReference>
<dbReference type="PANTHER" id="PTHR34856:SF2">
    <property type="entry name" value="PROTEIN NRFD"/>
    <property type="match status" value="1"/>
</dbReference>
<dbReference type="Pfam" id="PF03916">
    <property type="entry name" value="NrfD"/>
    <property type="match status" value="1"/>
</dbReference>
<protein>
    <recommendedName>
        <fullName>Tetrathionate reductase subunit C</fullName>
    </recommendedName>
</protein>
<keyword id="KW-0997">Cell inner membrane</keyword>
<keyword id="KW-1003">Cell membrane</keyword>
<keyword id="KW-0472">Membrane</keyword>
<keyword id="KW-1185">Reference proteome</keyword>
<keyword id="KW-0812">Transmembrane</keyword>
<keyword id="KW-1133">Transmembrane helix</keyword>